<reference key="1">
    <citation type="journal article" date="1998" name="Science">
        <title>Genome sequence of the nematode C. elegans: a platform for investigating biology.</title>
        <authorList>
            <consortium name="The C. elegans sequencing consortium"/>
        </authorList>
    </citation>
    <scope>NUCLEOTIDE SEQUENCE [LARGE SCALE GENOMIC DNA]</scope>
    <source>
        <strain>Bristol N2</strain>
    </source>
</reference>
<reference key="2">
    <citation type="journal article" date="2007" name="Mol. Cell. Proteomics">
        <title>Proteomics reveals N-linked glycoprotein diversity in Caenorhabditis elegans and suggests an atypical translocation mechanism for integral membrane proteins.</title>
        <authorList>
            <person name="Kaji H."/>
            <person name="Kamiie J."/>
            <person name="Kawakami H."/>
            <person name="Kido K."/>
            <person name="Yamauchi Y."/>
            <person name="Shinkawa T."/>
            <person name="Taoka M."/>
            <person name="Takahashi N."/>
            <person name="Isobe T."/>
        </authorList>
    </citation>
    <scope>GLYCOSYLATION [LARGE SCALE ANALYSIS] AT ASN-216 AND ASN-374</scope>
    <scope>IDENTIFICATION BY MASS SPECTROMETRY</scope>
    <scope>SUBCELLULAR LOCATION</scope>
    <source>
        <strain>Bristol N2</strain>
    </source>
</reference>
<gene>
    <name evidence="5" type="primary">del-10</name>
    <name evidence="5" type="ORF">T28D9.7</name>
</gene>
<proteinExistence type="evidence at protein level"/>
<feature type="chain" id="PRO_0000181316" description="Degenerin-like protein del-10" evidence="4">
    <location>
        <begin position="1"/>
        <end position="1069"/>
    </location>
</feature>
<feature type="topological domain" description="Cytoplasmic" evidence="1">
    <location>
        <begin position="1"/>
        <end position="95"/>
    </location>
</feature>
<feature type="transmembrane region" description="Helical" evidence="1">
    <location>
        <begin position="96"/>
        <end position="116"/>
    </location>
</feature>
<feature type="topological domain" description="Extracellular" evidence="1">
    <location>
        <begin position="117"/>
        <end position="830"/>
    </location>
</feature>
<feature type="transmembrane region" description="Helical" evidence="1">
    <location>
        <begin position="831"/>
        <end position="851"/>
    </location>
</feature>
<feature type="topological domain" description="Cytoplasmic" evidence="1">
    <location>
        <begin position="852"/>
        <end position="1069"/>
    </location>
</feature>
<feature type="region of interest" description="Disordered" evidence="2">
    <location>
        <begin position="898"/>
        <end position="948"/>
    </location>
</feature>
<feature type="region of interest" description="Disordered" evidence="2">
    <location>
        <begin position="960"/>
        <end position="1069"/>
    </location>
</feature>
<feature type="compositionally biased region" description="Basic and acidic residues" evidence="2">
    <location>
        <begin position="915"/>
        <end position="928"/>
    </location>
</feature>
<feature type="compositionally biased region" description="Polar residues" evidence="2">
    <location>
        <begin position="938"/>
        <end position="948"/>
    </location>
</feature>
<feature type="compositionally biased region" description="Basic and acidic residues" evidence="2">
    <location>
        <begin position="967"/>
        <end position="978"/>
    </location>
</feature>
<feature type="glycosylation site" description="N-linked (GlcNAc...) asparagine" evidence="3">
    <location>
        <position position="216"/>
    </location>
</feature>
<feature type="glycosylation site" description="N-linked (GlcNAc...) asparagine" evidence="1">
    <location>
        <position position="290"/>
    </location>
</feature>
<feature type="glycosylation site" description="N-linked (GlcNAc...) asparagine" evidence="3">
    <location>
        <position position="374"/>
    </location>
</feature>
<feature type="glycosylation site" description="N-linked (GlcNAc...) asparagine" evidence="1">
    <location>
        <position position="454"/>
    </location>
</feature>
<feature type="glycosylation site" description="N-linked (GlcNAc...) asparagine" evidence="1">
    <location>
        <position position="539"/>
    </location>
</feature>
<feature type="glycosylation site" description="N-linked (GlcNAc...) asparagine" evidence="1">
    <location>
        <position position="545"/>
    </location>
</feature>
<feature type="glycosylation site" description="N-linked (GlcNAc...) asparagine" evidence="1">
    <location>
        <position position="584"/>
    </location>
</feature>
<dbReference type="EMBL" id="FO081595">
    <property type="protein sequence ID" value="CCD72711.1"/>
    <property type="molecule type" value="Genomic_DNA"/>
</dbReference>
<dbReference type="PIR" id="T16948">
    <property type="entry name" value="T16948"/>
</dbReference>
<dbReference type="RefSeq" id="NP_495302.3">
    <property type="nucleotide sequence ID" value="NM_062901.6"/>
</dbReference>
<dbReference type="STRING" id="6239.T28D9.7.1"/>
<dbReference type="GlyCosmos" id="Q10025">
    <property type="glycosylation" value="7 sites, No reported glycans"/>
</dbReference>
<dbReference type="iPTMnet" id="Q10025"/>
<dbReference type="PaxDb" id="6239-T28D9.7"/>
<dbReference type="PeptideAtlas" id="Q10025"/>
<dbReference type="EnsemblMetazoa" id="T28D9.7.1">
    <property type="protein sequence ID" value="T28D9.7.1"/>
    <property type="gene ID" value="WBGene00020897"/>
</dbReference>
<dbReference type="GeneID" id="174069"/>
<dbReference type="KEGG" id="cel:CELE_T28D9.7"/>
<dbReference type="UCSC" id="T28D9.7">
    <property type="organism name" value="c. elegans"/>
</dbReference>
<dbReference type="AGR" id="WB:WBGene00020897"/>
<dbReference type="CTD" id="174069"/>
<dbReference type="WormBase" id="T28D9.7">
    <property type="protein sequence ID" value="CE41940"/>
    <property type="gene ID" value="WBGene00020897"/>
    <property type="gene designation" value="del-10"/>
</dbReference>
<dbReference type="eggNOG" id="KOG4294">
    <property type="taxonomic scope" value="Eukaryota"/>
</dbReference>
<dbReference type="GeneTree" id="ENSGT00940000160549"/>
<dbReference type="HOGENOM" id="CLU_010323_0_0_1"/>
<dbReference type="InParanoid" id="Q10025"/>
<dbReference type="OMA" id="TYSIWSL"/>
<dbReference type="OrthoDB" id="6502088at2759"/>
<dbReference type="Reactome" id="R-CEL-2672351">
    <property type="pathway name" value="Stimuli-sensing channels"/>
</dbReference>
<dbReference type="PRO" id="PR:Q10025"/>
<dbReference type="Proteomes" id="UP000001940">
    <property type="component" value="Chromosome II"/>
</dbReference>
<dbReference type="Bgee" id="WBGene00020897">
    <property type="expression patterns" value="Expressed in larva and 2 other cell types or tissues"/>
</dbReference>
<dbReference type="GO" id="GO:0005886">
    <property type="term" value="C:plasma membrane"/>
    <property type="evidence" value="ECO:0000318"/>
    <property type="project" value="GO_Central"/>
</dbReference>
<dbReference type="GO" id="GO:0015280">
    <property type="term" value="F:ligand-gated sodium channel activity"/>
    <property type="evidence" value="ECO:0000318"/>
    <property type="project" value="GO_Central"/>
</dbReference>
<dbReference type="GO" id="GO:0035725">
    <property type="term" value="P:sodium ion transmembrane transport"/>
    <property type="evidence" value="ECO:0000318"/>
    <property type="project" value="GO_Central"/>
</dbReference>
<dbReference type="Gene3D" id="2.60.470.10">
    <property type="entry name" value="Acid-sensing ion channels like domains"/>
    <property type="match status" value="1"/>
</dbReference>
<dbReference type="Gene3D" id="1.10.287.770">
    <property type="entry name" value="YojJ-like"/>
    <property type="match status" value="1"/>
</dbReference>
<dbReference type="InterPro" id="IPR001873">
    <property type="entry name" value="ENaC"/>
</dbReference>
<dbReference type="PANTHER" id="PTHR11690">
    <property type="entry name" value="AMILORIDE-SENSITIVE SODIUM CHANNEL-RELATED"/>
    <property type="match status" value="1"/>
</dbReference>
<dbReference type="PANTHER" id="PTHR11690:SF296">
    <property type="entry name" value="DEGENERIN-LIKE PROTEIN DEL-10"/>
    <property type="match status" value="1"/>
</dbReference>
<dbReference type="Pfam" id="PF00858">
    <property type="entry name" value="ASC"/>
    <property type="match status" value="2"/>
</dbReference>
<dbReference type="PRINTS" id="PR01078">
    <property type="entry name" value="AMINACHANNEL"/>
</dbReference>
<name>DEL10_CAEEL</name>
<keyword id="KW-0325">Glycoprotein</keyword>
<keyword id="KW-0407">Ion channel</keyword>
<keyword id="KW-0406">Ion transport</keyword>
<keyword id="KW-0472">Membrane</keyword>
<keyword id="KW-1185">Reference proteome</keyword>
<keyword id="KW-0915">Sodium</keyword>
<keyword id="KW-0894">Sodium channel</keyword>
<keyword id="KW-0739">Sodium transport</keyword>
<keyword id="KW-0812">Transmembrane</keyword>
<keyword id="KW-1133">Transmembrane helix</keyword>
<keyword id="KW-0813">Transport</keyword>
<accession>Q10025</accession>
<sequence>MVRMAERLAENFIPEANQRNENEPAYSRYKRVGQNRSRLNSRASLGSSMGRRITLIETDSGVIEVESDKQFLDAFKDANMDAVHHLNAASPVTRGLWCMIIIAFVILVLVQCYSQIKLYISEPVATNIEAEYPSKISFPTVAICNNNQFRLTYLTGGRIMNRRSKSISGSLLSTGHDVESVFDTVLRKSWDMDAVKFLRSAAHWKSRMILGCTWPNGTSCKLSDFKAVWTTTGLCWAINTDPHNPYEVTGSGEGHGLRLLLNVESYERVDACTKHFRTKTLPGLKILIYNQTDIPDSSMNGVNVPSGYSMDIPFKMQHRSKLTGVHCIEENDEQIEASTDFNNPENIRTCTLRRYMTEVENSCHCTLRRAYTSNSTDVKMKACNVDQYFGCAQKAMQRIREEGTASTCLPPCKSIDYTAWQDMNRLPQNLMPALIEEQEEDDEDDVEQEELDENVSFSTVSGGETFSCEDSAYLDDKQVMRIKRDAHRAYEMQARHQEDIFLRSRRLIARLRNAINSIERYKWGWHYDTFSGVADRLSNLTCFSNFSERHRDIISILESRPITSEEKKANQMFFLLDETAFNRNATRYMSVGDLKSRYGDKVDDVAEEIAVILRIMEKLWHVFMPDSYIRTMTGDFSRMDRIIELMNQYELNKLQRRAWAEKMQSRQMKHFFEDDFYESYYQPLIKDLDTTLVKQIDEVEADWPKVEYYLQRGSAGKTGAIMFFGDGNKDNRQKFEKLIVEMHECASGKMRKEAGKMLSSFKKSYRELQAAYGKLFKEELPDYLENFQFGNKFVGDNFAMVNIFLHRMNLEVWSQDRTYGFWSLACDIGGALGLFLGASLLTIIEIVYLCIQYGLCGKRARNMKCIPMDALTRQMKKVATCSCCKKPIEKSREPIYKKKSQSYQRRFTADDEDQGDKFRSRASSEESKRRKNIWAQMNDPSGNSTLTPSEIKNFLDQVQRNSQPPSYHDDHHPEDHYYYNDPNYLTISPPSDRPEDNREGSTSGYYSSPRAPPQANPRDESPIPDTEPISVSEFSDALAPPLFKTPPRERRTRKEQKIDEEDDDKHSYV</sequence>
<comment type="subcellular location">
    <subcellularLocation>
        <location evidence="3">Membrane</location>
        <topology evidence="3">Multi-pass membrane protein</topology>
    </subcellularLocation>
</comment>
<comment type="similarity">
    <text evidence="4">Belongs to the amiloride-sensitive sodium channel (TC 1.A.6) family.</text>
</comment>
<evidence type="ECO:0000255" key="1"/>
<evidence type="ECO:0000256" key="2">
    <source>
        <dbReference type="SAM" id="MobiDB-lite"/>
    </source>
</evidence>
<evidence type="ECO:0000269" key="3">
    <source>
    </source>
</evidence>
<evidence type="ECO:0000305" key="4"/>
<evidence type="ECO:0000312" key="5">
    <source>
        <dbReference type="WormBase" id="T28D9.7"/>
    </source>
</evidence>
<protein>
    <recommendedName>
        <fullName evidence="5">Degenerin-like protein del-10</fullName>
    </recommendedName>
</protein>
<organism>
    <name type="scientific">Caenorhabditis elegans</name>
    <dbReference type="NCBI Taxonomy" id="6239"/>
    <lineage>
        <taxon>Eukaryota</taxon>
        <taxon>Metazoa</taxon>
        <taxon>Ecdysozoa</taxon>
        <taxon>Nematoda</taxon>
        <taxon>Chromadorea</taxon>
        <taxon>Rhabditida</taxon>
        <taxon>Rhabditina</taxon>
        <taxon>Rhabditomorpha</taxon>
        <taxon>Rhabditoidea</taxon>
        <taxon>Rhabditidae</taxon>
        <taxon>Peloderinae</taxon>
        <taxon>Caenorhabditis</taxon>
    </lineage>
</organism>